<protein>
    <recommendedName>
        <fullName evidence="2">Photosystem I iron-sulfur center</fullName>
        <ecNumber evidence="2">1.97.1.12</ecNumber>
    </recommendedName>
    <alternativeName>
        <fullName evidence="2">9 kDa polypeptide</fullName>
    </alternativeName>
    <alternativeName>
        <fullName evidence="2">PSI-C</fullName>
    </alternativeName>
    <alternativeName>
        <fullName evidence="2">Photosystem I subunit VII</fullName>
    </alternativeName>
    <alternativeName>
        <fullName evidence="2">PsaC</fullName>
    </alternativeName>
</protein>
<gene>
    <name evidence="2" type="primary">psaC</name>
</gene>
<proteinExistence type="inferred from homology"/>
<name>PSAC_ZYGCR</name>
<comment type="function">
    <text>Apoprotein for the two 4Fe-4S centers FA and FB of photosystem I (PSI); essential for photochemical activity. FB is the terminal electron acceptor of PSI, donating electrons to ferredoxin. The C-terminus interacts with PsaA/B/D and helps assemble the protein into the PSI complex. Required for binding of PsaD and PsaE to PSI. PSI is a plastocyanin-ferredoxin oxidoreductase, converting photonic excitation into a charge separation, which transfers an electron from the donor P700 chlorophyll pair to the spectroscopically characterized acceptors A0, A1, FX, FA and FB in turn.</text>
</comment>
<comment type="catalytic activity">
    <reaction evidence="2">
        <text>reduced [plastocyanin] + hnu + oxidized [2Fe-2S]-[ferredoxin] = oxidized [plastocyanin] + reduced [2Fe-2S]-[ferredoxin]</text>
        <dbReference type="Rhea" id="RHEA:30407"/>
        <dbReference type="Rhea" id="RHEA-COMP:10000"/>
        <dbReference type="Rhea" id="RHEA-COMP:10001"/>
        <dbReference type="Rhea" id="RHEA-COMP:10039"/>
        <dbReference type="Rhea" id="RHEA-COMP:10040"/>
        <dbReference type="ChEBI" id="CHEBI:29036"/>
        <dbReference type="ChEBI" id="CHEBI:30212"/>
        <dbReference type="ChEBI" id="CHEBI:33737"/>
        <dbReference type="ChEBI" id="CHEBI:33738"/>
        <dbReference type="ChEBI" id="CHEBI:49552"/>
        <dbReference type="EC" id="1.97.1.12"/>
    </reaction>
</comment>
<comment type="cofactor">
    <cofactor evidence="2">
        <name>[4Fe-4S] cluster</name>
        <dbReference type="ChEBI" id="CHEBI:49883"/>
    </cofactor>
    <text evidence="2">Binds 2 [4Fe-4S] clusters. Cluster 2 is most probably the spectroscopically characterized electron acceptor FA and cluster 1 is most probably FB.</text>
</comment>
<comment type="subunit">
    <text evidence="2">The eukaryotic PSI reaction center is composed of at least 11 subunits.</text>
</comment>
<comment type="subcellular location">
    <subcellularLocation>
        <location evidence="2">Plastid</location>
        <location evidence="2">Chloroplast thylakoid membrane</location>
        <topology evidence="2">Peripheral membrane protein</topology>
        <orientation evidence="2">Stromal side</orientation>
    </subcellularLocation>
</comment>
<organism>
    <name type="scientific">Zygnema circumcarinatum</name>
    <name type="common">Green alga</name>
    <dbReference type="NCBI Taxonomy" id="35869"/>
    <lineage>
        <taxon>Eukaryota</taxon>
        <taxon>Viridiplantae</taxon>
        <taxon>Streptophyta</taxon>
        <taxon>Zygnematophyceae</taxon>
        <taxon>Zygnematophycidae</taxon>
        <taxon>Zygnematales</taxon>
        <taxon>Zygnemataceae</taxon>
        <taxon>Zygnema</taxon>
    </lineage>
</organism>
<feature type="initiator methionine" description="Removed" evidence="1">
    <location>
        <position position="1"/>
    </location>
</feature>
<feature type="chain" id="PRO_0000276006" description="Photosystem I iron-sulfur center">
    <location>
        <begin position="2"/>
        <end position="81"/>
    </location>
</feature>
<feature type="domain" description="4Fe-4S ferredoxin-type 1" evidence="2">
    <location>
        <begin position="2"/>
        <end position="31"/>
    </location>
</feature>
<feature type="domain" description="4Fe-4S ferredoxin-type 2" evidence="2">
    <location>
        <begin position="39"/>
        <end position="68"/>
    </location>
</feature>
<feature type="binding site" evidence="2">
    <location>
        <position position="11"/>
    </location>
    <ligand>
        <name>[4Fe-4S] cluster</name>
        <dbReference type="ChEBI" id="CHEBI:49883"/>
        <label>1</label>
    </ligand>
</feature>
<feature type="binding site" evidence="2">
    <location>
        <position position="14"/>
    </location>
    <ligand>
        <name>[4Fe-4S] cluster</name>
        <dbReference type="ChEBI" id="CHEBI:49883"/>
        <label>1</label>
    </ligand>
</feature>
<feature type="binding site" evidence="2">
    <location>
        <position position="17"/>
    </location>
    <ligand>
        <name>[4Fe-4S] cluster</name>
        <dbReference type="ChEBI" id="CHEBI:49883"/>
        <label>1</label>
    </ligand>
</feature>
<feature type="binding site" evidence="2">
    <location>
        <position position="21"/>
    </location>
    <ligand>
        <name>[4Fe-4S] cluster</name>
        <dbReference type="ChEBI" id="CHEBI:49883"/>
        <label>2</label>
    </ligand>
</feature>
<feature type="binding site" evidence="2">
    <location>
        <position position="48"/>
    </location>
    <ligand>
        <name>[4Fe-4S] cluster</name>
        <dbReference type="ChEBI" id="CHEBI:49883"/>
        <label>2</label>
    </ligand>
</feature>
<feature type="binding site" evidence="2">
    <location>
        <position position="51"/>
    </location>
    <ligand>
        <name>[4Fe-4S] cluster</name>
        <dbReference type="ChEBI" id="CHEBI:49883"/>
        <label>2</label>
    </ligand>
</feature>
<feature type="binding site" evidence="2">
    <location>
        <position position="54"/>
    </location>
    <ligand>
        <name>[4Fe-4S] cluster</name>
        <dbReference type="ChEBI" id="CHEBI:49883"/>
        <label>2</label>
    </ligand>
</feature>
<feature type="binding site" evidence="2">
    <location>
        <position position="58"/>
    </location>
    <ligand>
        <name>[4Fe-4S] cluster</name>
        <dbReference type="ChEBI" id="CHEBI:49883"/>
        <label>1</label>
    </ligand>
</feature>
<evidence type="ECO:0000250" key="1"/>
<evidence type="ECO:0000255" key="2">
    <source>
        <dbReference type="HAMAP-Rule" id="MF_01303"/>
    </source>
</evidence>
<sequence length="81" mass="8812">MAHSVKIYDTCIGCTQCVRACPTDVLEMIPWDGCKASQIASAPRTEDCVGCKRCESACPTDFLSVRVYLGPETTRSMGLAY</sequence>
<dbReference type="EC" id="1.97.1.12" evidence="2"/>
<dbReference type="EMBL" id="AY958086">
    <property type="protein sequence ID" value="AAX45832.1"/>
    <property type="molecule type" value="Genomic_DNA"/>
</dbReference>
<dbReference type="RefSeq" id="YP_636506.1">
    <property type="nucleotide sequence ID" value="NC_008117.1"/>
</dbReference>
<dbReference type="SMR" id="Q32RM0"/>
<dbReference type="GeneID" id="4108152"/>
<dbReference type="GO" id="GO:0009535">
    <property type="term" value="C:chloroplast thylakoid membrane"/>
    <property type="evidence" value="ECO:0007669"/>
    <property type="project" value="UniProtKB-SubCell"/>
</dbReference>
<dbReference type="GO" id="GO:0009522">
    <property type="term" value="C:photosystem I"/>
    <property type="evidence" value="ECO:0007669"/>
    <property type="project" value="UniProtKB-KW"/>
</dbReference>
<dbReference type="GO" id="GO:0051539">
    <property type="term" value="F:4 iron, 4 sulfur cluster binding"/>
    <property type="evidence" value="ECO:0007669"/>
    <property type="project" value="UniProtKB-KW"/>
</dbReference>
<dbReference type="GO" id="GO:0009055">
    <property type="term" value="F:electron transfer activity"/>
    <property type="evidence" value="ECO:0007669"/>
    <property type="project" value="UniProtKB-UniRule"/>
</dbReference>
<dbReference type="GO" id="GO:0046872">
    <property type="term" value="F:metal ion binding"/>
    <property type="evidence" value="ECO:0007669"/>
    <property type="project" value="UniProtKB-KW"/>
</dbReference>
<dbReference type="GO" id="GO:0016491">
    <property type="term" value="F:oxidoreductase activity"/>
    <property type="evidence" value="ECO:0007669"/>
    <property type="project" value="UniProtKB-KW"/>
</dbReference>
<dbReference type="GO" id="GO:0009773">
    <property type="term" value="P:photosynthetic electron transport in photosystem I"/>
    <property type="evidence" value="ECO:0007669"/>
    <property type="project" value="InterPro"/>
</dbReference>
<dbReference type="FunFam" id="3.30.70.20:FF:000001">
    <property type="entry name" value="Photosystem I iron-sulfur center"/>
    <property type="match status" value="1"/>
</dbReference>
<dbReference type="Gene3D" id="3.30.70.20">
    <property type="match status" value="1"/>
</dbReference>
<dbReference type="HAMAP" id="MF_01303">
    <property type="entry name" value="PSI_PsaC"/>
    <property type="match status" value="1"/>
</dbReference>
<dbReference type="InterPro" id="IPR017896">
    <property type="entry name" value="4Fe4S_Fe-S-bd"/>
</dbReference>
<dbReference type="InterPro" id="IPR017900">
    <property type="entry name" value="4Fe4S_Fe_S_CS"/>
</dbReference>
<dbReference type="InterPro" id="IPR050157">
    <property type="entry name" value="PSI_iron-sulfur_center"/>
</dbReference>
<dbReference type="InterPro" id="IPR017491">
    <property type="entry name" value="PSI_PsaC"/>
</dbReference>
<dbReference type="NCBIfam" id="TIGR03048">
    <property type="entry name" value="PS_I_psaC"/>
    <property type="match status" value="1"/>
</dbReference>
<dbReference type="PANTHER" id="PTHR24960:SF79">
    <property type="entry name" value="PHOTOSYSTEM I IRON-SULFUR CENTER"/>
    <property type="match status" value="1"/>
</dbReference>
<dbReference type="PANTHER" id="PTHR24960">
    <property type="entry name" value="PHOTOSYSTEM I IRON-SULFUR CENTER-RELATED"/>
    <property type="match status" value="1"/>
</dbReference>
<dbReference type="Pfam" id="PF14697">
    <property type="entry name" value="Fer4_21"/>
    <property type="match status" value="1"/>
</dbReference>
<dbReference type="SUPFAM" id="SSF54862">
    <property type="entry name" value="4Fe-4S ferredoxins"/>
    <property type="match status" value="1"/>
</dbReference>
<dbReference type="PROSITE" id="PS00198">
    <property type="entry name" value="4FE4S_FER_1"/>
    <property type="match status" value="2"/>
</dbReference>
<dbReference type="PROSITE" id="PS51379">
    <property type="entry name" value="4FE4S_FER_2"/>
    <property type="match status" value="2"/>
</dbReference>
<accession>Q32RM0</accession>
<geneLocation type="chloroplast"/>
<keyword id="KW-0004">4Fe-4S</keyword>
<keyword id="KW-0150">Chloroplast</keyword>
<keyword id="KW-0249">Electron transport</keyword>
<keyword id="KW-0408">Iron</keyword>
<keyword id="KW-0411">Iron-sulfur</keyword>
<keyword id="KW-0472">Membrane</keyword>
<keyword id="KW-0479">Metal-binding</keyword>
<keyword id="KW-0560">Oxidoreductase</keyword>
<keyword id="KW-0602">Photosynthesis</keyword>
<keyword id="KW-0603">Photosystem I</keyword>
<keyword id="KW-0934">Plastid</keyword>
<keyword id="KW-0677">Repeat</keyword>
<keyword id="KW-0793">Thylakoid</keyword>
<keyword id="KW-0813">Transport</keyword>
<reference key="1">
    <citation type="journal article" date="2005" name="BMC Biol.">
        <title>The complete chloroplast DNA sequences of the charophycean green algae Staurastrum and Zygnema reveal that the chloroplast genome underwent extensive changes during the evolution of the Zygnematales.</title>
        <authorList>
            <person name="Turmel M."/>
            <person name="Otis C."/>
            <person name="Lemieux C."/>
        </authorList>
    </citation>
    <scope>NUCLEOTIDE SEQUENCE [LARGE SCALE GENOMIC DNA]</scope>
</reference>